<sequence>METLKRKIIDEGRLLDGHILKVDNFLNHQIDVRLMNDIGQAFAERFAGTRIDKILTIEASGIAVAAIASQYFGFVPVVFGKKTQSLNLDAEAFESEVYSYTKQTSYKVRVSKRYLRPGEQVLIIDDFLANGAAASGLIDIVRQAGAEPVGVGIVIEKGFQPGRSKIEAHGIRVESLAIIQSFDDNQVHFG</sequence>
<dbReference type="EC" id="2.4.2.22" evidence="1"/>
<dbReference type="EMBL" id="CP001154">
    <property type="protein sequence ID" value="ACO73298.1"/>
    <property type="molecule type" value="Genomic_DNA"/>
</dbReference>
<dbReference type="RefSeq" id="WP_012695792.1">
    <property type="nucleotide sequence ID" value="NC_012559.1"/>
</dbReference>
<dbReference type="SMR" id="C1DBA1"/>
<dbReference type="STRING" id="557598.LHK_00303"/>
<dbReference type="KEGG" id="lhk:LHK_00303"/>
<dbReference type="eggNOG" id="COG0503">
    <property type="taxonomic scope" value="Bacteria"/>
</dbReference>
<dbReference type="HOGENOM" id="CLU_099015_0_0_4"/>
<dbReference type="UniPathway" id="UPA00602">
    <property type="reaction ID" value="UER00658"/>
</dbReference>
<dbReference type="Proteomes" id="UP000002010">
    <property type="component" value="Chromosome"/>
</dbReference>
<dbReference type="GO" id="GO:0005737">
    <property type="term" value="C:cytoplasm"/>
    <property type="evidence" value="ECO:0007669"/>
    <property type="project" value="UniProtKB-SubCell"/>
</dbReference>
<dbReference type="GO" id="GO:0000310">
    <property type="term" value="F:xanthine phosphoribosyltransferase activity"/>
    <property type="evidence" value="ECO:0007669"/>
    <property type="project" value="UniProtKB-UniRule"/>
</dbReference>
<dbReference type="GO" id="GO:0006166">
    <property type="term" value="P:purine ribonucleoside salvage"/>
    <property type="evidence" value="ECO:0007669"/>
    <property type="project" value="UniProtKB-KW"/>
</dbReference>
<dbReference type="GO" id="GO:0046110">
    <property type="term" value="P:xanthine metabolic process"/>
    <property type="evidence" value="ECO:0007669"/>
    <property type="project" value="InterPro"/>
</dbReference>
<dbReference type="GO" id="GO:0032265">
    <property type="term" value="P:XMP salvage"/>
    <property type="evidence" value="ECO:0007669"/>
    <property type="project" value="UniProtKB-UniRule"/>
</dbReference>
<dbReference type="CDD" id="cd06223">
    <property type="entry name" value="PRTases_typeI"/>
    <property type="match status" value="1"/>
</dbReference>
<dbReference type="Gene3D" id="3.40.50.2020">
    <property type="match status" value="1"/>
</dbReference>
<dbReference type="HAMAP" id="MF_01184">
    <property type="entry name" value="XPRTase"/>
    <property type="match status" value="1"/>
</dbReference>
<dbReference type="InterPro" id="IPR000836">
    <property type="entry name" value="PRibTrfase_dom"/>
</dbReference>
<dbReference type="InterPro" id="IPR029057">
    <property type="entry name" value="PRTase-like"/>
</dbReference>
<dbReference type="InterPro" id="IPR050118">
    <property type="entry name" value="Pur/Pyrimidine_PRTase"/>
</dbReference>
<dbReference type="InterPro" id="IPR010079">
    <property type="entry name" value="Xanthine_PRibTrfase"/>
</dbReference>
<dbReference type="NCBIfam" id="NF006671">
    <property type="entry name" value="PRK09219.1"/>
    <property type="match status" value="1"/>
</dbReference>
<dbReference type="NCBIfam" id="TIGR01744">
    <property type="entry name" value="XPRTase"/>
    <property type="match status" value="1"/>
</dbReference>
<dbReference type="PANTHER" id="PTHR43864">
    <property type="entry name" value="HYPOXANTHINE/GUANINE PHOSPHORIBOSYLTRANSFERASE"/>
    <property type="match status" value="1"/>
</dbReference>
<dbReference type="PANTHER" id="PTHR43864:SF1">
    <property type="entry name" value="XANTHINE PHOSPHORIBOSYLTRANSFERASE"/>
    <property type="match status" value="1"/>
</dbReference>
<dbReference type="Pfam" id="PF00156">
    <property type="entry name" value="Pribosyltran"/>
    <property type="match status" value="1"/>
</dbReference>
<dbReference type="SUPFAM" id="SSF53271">
    <property type="entry name" value="PRTase-like"/>
    <property type="match status" value="1"/>
</dbReference>
<evidence type="ECO:0000255" key="1">
    <source>
        <dbReference type="HAMAP-Rule" id="MF_01184"/>
    </source>
</evidence>
<accession>C1DBA1</accession>
<comment type="function">
    <text evidence="1">Converts the preformed base xanthine, a product of nucleic acid breakdown, to xanthosine 5'-monophosphate (XMP), so it can be reused for RNA or DNA synthesis.</text>
</comment>
<comment type="catalytic activity">
    <reaction evidence="1">
        <text>XMP + diphosphate = xanthine + 5-phospho-alpha-D-ribose 1-diphosphate</text>
        <dbReference type="Rhea" id="RHEA:10800"/>
        <dbReference type="ChEBI" id="CHEBI:17712"/>
        <dbReference type="ChEBI" id="CHEBI:33019"/>
        <dbReference type="ChEBI" id="CHEBI:57464"/>
        <dbReference type="ChEBI" id="CHEBI:58017"/>
        <dbReference type="EC" id="2.4.2.22"/>
    </reaction>
</comment>
<comment type="pathway">
    <text evidence="1">Purine metabolism; XMP biosynthesis via salvage pathway; XMP from xanthine: step 1/1.</text>
</comment>
<comment type="subunit">
    <text evidence="1">Homodimer.</text>
</comment>
<comment type="subcellular location">
    <subcellularLocation>
        <location evidence="1">Cytoplasm</location>
    </subcellularLocation>
</comment>
<comment type="similarity">
    <text evidence="1">Belongs to the purine/pyrimidine phosphoribosyltransferase family. Xpt subfamily.</text>
</comment>
<name>XPT_LARHH</name>
<protein>
    <recommendedName>
        <fullName evidence="1">Xanthine phosphoribosyltransferase</fullName>
        <shortName evidence="1">XPRTase</shortName>
        <ecNumber evidence="1">2.4.2.22</ecNumber>
    </recommendedName>
</protein>
<reference key="1">
    <citation type="journal article" date="2009" name="PLoS Genet.">
        <title>The complete genome and proteome of Laribacter hongkongensis reveal potential mechanisms for adaptations to different temperatures and habitats.</title>
        <authorList>
            <person name="Woo P.C.Y."/>
            <person name="Lau S.K.P."/>
            <person name="Tse H."/>
            <person name="Teng J.L.L."/>
            <person name="Curreem S.O."/>
            <person name="Tsang A.K.L."/>
            <person name="Fan R.Y.Y."/>
            <person name="Wong G.K.M."/>
            <person name="Huang Y."/>
            <person name="Loman N.J."/>
            <person name="Snyder L.A.S."/>
            <person name="Cai J.J."/>
            <person name="Huang J.-D."/>
            <person name="Mak W."/>
            <person name="Pallen M.J."/>
            <person name="Lok S."/>
            <person name="Yuen K.-Y."/>
        </authorList>
    </citation>
    <scope>NUCLEOTIDE SEQUENCE [LARGE SCALE GENOMIC DNA]</scope>
    <source>
        <strain>HLHK9</strain>
    </source>
</reference>
<organism>
    <name type="scientific">Laribacter hongkongensis (strain HLHK9)</name>
    <dbReference type="NCBI Taxonomy" id="557598"/>
    <lineage>
        <taxon>Bacteria</taxon>
        <taxon>Pseudomonadati</taxon>
        <taxon>Pseudomonadota</taxon>
        <taxon>Betaproteobacteria</taxon>
        <taxon>Neisseriales</taxon>
        <taxon>Aquaspirillaceae</taxon>
        <taxon>Laribacter</taxon>
    </lineage>
</organism>
<proteinExistence type="inferred from homology"/>
<keyword id="KW-0963">Cytoplasm</keyword>
<keyword id="KW-0328">Glycosyltransferase</keyword>
<keyword id="KW-0660">Purine salvage</keyword>
<keyword id="KW-1185">Reference proteome</keyword>
<keyword id="KW-0808">Transferase</keyword>
<feature type="chain" id="PRO_1000164451" description="Xanthine phosphoribosyltransferase">
    <location>
        <begin position="1"/>
        <end position="190"/>
    </location>
</feature>
<feature type="binding site" evidence="1">
    <location>
        <position position="20"/>
    </location>
    <ligand>
        <name>xanthine</name>
        <dbReference type="ChEBI" id="CHEBI:17712"/>
    </ligand>
</feature>
<feature type="binding site" evidence="1">
    <location>
        <position position="27"/>
    </location>
    <ligand>
        <name>xanthine</name>
        <dbReference type="ChEBI" id="CHEBI:17712"/>
    </ligand>
</feature>
<feature type="binding site" evidence="1">
    <location>
        <begin position="129"/>
        <end position="133"/>
    </location>
    <ligand>
        <name>5-phospho-alpha-D-ribose 1-diphosphate</name>
        <dbReference type="ChEBI" id="CHEBI:58017"/>
    </ligand>
</feature>
<feature type="binding site" evidence="1">
    <location>
        <position position="157"/>
    </location>
    <ligand>
        <name>xanthine</name>
        <dbReference type="ChEBI" id="CHEBI:17712"/>
    </ligand>
</feature>
<gene>
    <name evidence="1" type="primary">xpt</name>
    <name type="ordered locus">LHK_00303</name>
</gene>